<keyword id="KW-0131">Cell cycle</keyword>
<keyword id="KW-0132">Cell division</keyword>
<keyword id="KW-0133">Cell shape</keyword>
<keyword id="KW-0961">Cell wall biogenesis/degradation</keyword>
<keyword id="KW-0963">Cytoplasm</keyword>
<keyword id="KW-0573">Peptidoglycan synthesis</keyword>
<keyword id="KW-0670">Pyruvate</keyword>
<keyword id="KW-1185">Reference proteome</keyword>
<keyword id="KW-0808">Transferase</keyword>
<reference key="1">
    <citation type="submission" date="2009-01" db="EMBL/GenBank/DDBJ databases">
        <title>Complete sequence of chromosome of Methylobacterium nodulans ORS 2060.</title>
        <authorList>
            <consortium name="US DOE Joint Genome Institute"/>
            <person name="Lucas S."/>
            <person name="Copeland A."/>
            <person name="Lapidus A."/>
            <person name="Glavina del Rio T."/>
            <person name="Dalin E."/>
            <person name="Tice H."/>
            <person name="Bruce D."/>
            <person name="Goodwin L."/>
            <person name="Pitluck S."/>
            <person name="Sims D."/>
            <person name="Brettin T."/>
            <person name="Detter J.C."/>
            <person name="Han C."/>
            <person name="Larimer F."/>
            <person name="Land M."/>
            <person name="Hauser L."/>
            <person name="Kyrpides N."/>
            <person name="Ivanova N."/>
            <person name="Marx C.J."/>
            <person name="Richardson P."/>
        </authorList>
    </citation>
    <scope>NUCLEOTIDE SEQUENCE [LARGE SCALE GENOMIC DNA]</scope>
    <source>
        <strain>LMG 21967 / CNCM I-2342 / ORS 2060</strain>
    </source>
</reference>
<feature type="chain" id="PRO_1000119119" description="UDP-N-acetylglucosamine 1-carboxyvinyltransferase">
    <location>
        <begin position="1"/>
        <end position="429"/>
    </location>
</feature>
<feature type="active site" description="Proton donor" evidence="1">
    <location>
        <position position="126"/>
    </location>
</feature>
<feature type="binding site" evidence="1">
    <location>
        <begin position="22"/>
        <end position="23"/>
    </location>
    <ligand>
        <name>phosphoenolpyruvate</name>
        <dbReference type="ChEBI" id="CHEBI:58702"/>
    </ligand>
</feature>
<feature type="binding site" evidence="1">
    <location>
        <position position="102"/>
    </location>
    <ligand>
        <name>UDP-N-acetyl-alpha-D-glucosamine</name>
        <dbReference type="ChEBI" id="CHEBI:57705"/>
    </ligand>
</feature>
<feature type="binding site" evidence="1">
    <location>
        <begin position="131"/>
        <end position="135"/>
    </location>
    <ligand>
        <name>UDP-N-acetyl-alpha-D-glucosamine</name>
        <dbReference type="ChEBI" id="CHEBI:57705"/>
    </ligand>
</feature>
<feature type="binding site" evidence="1">
    <location>
        <position position="316"/>
    </location>
    <ligand>
        <name>UDP-N-acetyl-alpha-D-glucosamine</name>
        <dbReference type="ChEBI" id="CHEBI:57705"/>
    </ligand>
</feature>
<feature type="binding site" evidence="1">
    <location>
        <position position="338"/>
    </location>
    <ligand>
        <name>UDP-N-acetyl-alpha-D-glucosamine</name>
        <dbReference type="ChEBI" id="CHEBI:57705"/>
    </ligand>
</feature>
<feature type="modified residue" description="2-(S-cysteinyl)pyruvic acid O-phosphothioketal" evidence="1">
    <location>
        <position position="126"/>
    </location>
</feature>
<gene>
    <name evidence="1" type="primary">murA</name>
    <name type="ordered locus">Mnod_4930</name>
</gene>
<protein>
    <recommendedName>
        <fullName evidence="1">UDP-N-acetylglucosamine 1-carboxyvinyltransferase</fullName>
        <ecNumber evidence="1">2.5.1.7</ecNumber>
    </recommendedName>
    <alternativeName>
        <fullName evidence="1">Enoylpyruvate transferase</fullName>
    </alternativeName>
    <alternativeName>
        <fullName evidence="1">UDP-N-acetylglucosamine enolpyruvyl transferase</fullName>
        <shortName evidence="1">EPT</shortName>
    </alternativeName>
</protein>
<evidence type="ECO:0000255" key="1">
    <source>
        <dbReference type="HAMAP-Rule" id="MF_00111"/>
    </source>
</evidence>
<organism>
    <name type="scientific">Methylobacterium nodulans (strain LMG 21967 / CNCM I-2342 / ORS 2060)</name>
    <dbReference type="NCBI Taxonomy" id="460265"/>
    <lineage>
        <taxon>Bacteria</taxon>
        <taxon>Pseudomonadati</taxon>
        <taxon>Pseudomonadota</taxon>
        <taxon>Alphaproteobacteria</taxon>
        <taxon>Hyphomicrobiales</taxon>
        <taxon>Methylobacteriaceae</taxon>
        <taxon>Methylobacterium</taxon>
    </lineage>
</organism>
<accession>B8IH95</accession>
<proteinExistence type="inferred from homology"/>
<name>MURA_METNO</name>
<dbReference type="EC" id="2.5.1.7" evidence="1"/>
<dbReference type="EMBL" id="CP001349">
    <property type="protein sequence ID" value="ACL59787.1"/>
    <property type="molecule type" value="Genomic_DNA"/>
</dbReference>
<dbReference type="RefSeq" id="WP_015931416.1">
    <property type="nucleotide sequence ID" value="NC_011894.1"/>
</dbReference>
<dbReference type="SMR" id="B8IH95"/>
<dbReference type="STRING" id="460265.Mnod_4930"/>
<dbReference type="KEGG" id="mno:Mnod_4930"/>
<dbReference type="eggNOG" id="COG0766">
    <property type="taxonomic scope" value="Bacteria"/>
</dbReference>
<dbReference type="HOGENOM" id="CLU_027387_0_0_5"/>
<dbReference type="OrthoDB" id="9803760at2"/>
<dbReference type="UniPathway" id="UPA00219"/>
<dbReference type="Proteomes" id="UP000008207">
    <property type="component" value="Chromosome"/>
</dbReference>
<dbReference type="GO" id="GO:0005737">
    <property type="term" value="C:cytoplasm"/>
    <property type="evidence" value="ECO:0007669"/>
    <property type="project" value="UniProtKB-SubCell"/>
</dbReference>
<dbReference type="GO" id="GO:0008760">
    <property type="term" value="F:UDP-N-acetylglucosamine 1-carboxyvinyltransferase activity"/>
    <property type="evidence" value="ECO:0007669"/>
    <property type="project" value="UniProtKB-UniRule"/>
</dbReference>
<dbReference type="GO" id="GO:0051301">
    <property type="term" value="P:cell division"/>
    <property type="evidence" value="ECO:0007669"/>
    <property type="project" value="UniProtKB-KW"/>
</dbReference>
<dbReference type="GO" id="GO:0071555">
    <property type="term" value="P:cell wall organization"/>
    <property type="evidence" value="ECO:0007669"/>
    <property type="project" value="UniProtKB-KW"/>
</dbReference>
<dbReference type="GO" id="GO:0009252">
    <property type="term" value="P:peptidoglycan biosynthetic process"/>
    <property type="evidence" value="ECO:0007669"/>
    <property type="project" value="UniProtKB-UniRule"/>
</dbReference>
<dbReference type="GO" id="GO:0008360">
    <property type="term" value="P:regulation of cell shape"/>
    <property type="evidence" value="ECO:0007669"/>
    <property type="project" value="UniProtKB-KW"/>
</dbReference>
<dbReference type="GO" id="GO:0019277">
    <property type="term" value="P:UDP-N-acetylgalactosamine biosynthetic process"/>
    <property type="evidence" value="ECO:0007669"/>
    <property type="project" value="InterPro"/>
</dbReference>
<dbReference type="CDD" id="cd01555">
    <property type="entry name" value="UdpNAET"/>
    <property type="match status" value="1"/>
</dbReference>
<dbReference type="FunFam" id="3.65.10.10:FF:000001">
    <property type="entry name" value="UDP-N-acetylglucosamine 1-carboxyvinyltransferase"/>
    <property type="match status" value="1"/>
</dbReference>
<dbReference type="Gene3D" id="3.65.10.10">
    <property type="entry name" value="Enolpyruvate transferase domain"/>
    <property type="match status" value="2"/>
</dbReference>
<dbReference type="HAMAP" id="MF_00111">
    <property type="entry name" value="MurA"/>
    <property type="match status" value="1"/>
</dbReference>
<dbReference type="InterPro" id="IPR001986">
    <property type="entry name" value="Enolpyruvate_Tfrase_dom"/>
</dbReference>
<dbReference type="InterPro" id="IPR036968">
    <property type="entry name" value="Enolpyruvate_Tfrase_sf"/>
</dbReference>
<dbReference type="InterPro" id="IPR050068">
    <property type="entry name" value="MurA_subfamily"/>
</dbReference>
<dbReference type="InterPro" id="IPR013792">
    <property type="entry name" value="RNA3'P_cycl/enolpyr_Trfase_a/b"/>
</dbReference>
<dbReference type="InterPro" id="IPR005750">
    <property type="entry name" value="UDP_GlcNAc_COvinyl_MurA"/>
</dbReference>
<dbReference type="NCBIfam" id="TIGR01072">
    <property type="entry name" value="murA"/>
    <property type="match status" value="1"/>
</dbReference>
<dbReference type="NCBIfam" id="NF006873">
    <property type="entry name" value="PRK09369.1"/>
    <property type="match status" value="1"/>
</dbReference>
<dbReference type="PANTHER" id="PTHR43783">
    <property type="entry name" value="UDP-N-ACETYLGLUCOSAMINE 1-CARBOXYVINYLTRANSFERASE"/>
    <property type="match status" value="1"/>
</dbReference>
<dbReference type="PANTHER" id="PTHR43783:SF1">
    <property type="entry name" value="UDP-N-ACETYLGLUCOSAMINE 1-CARBOXYVINYLTRANSFERASE"/>
    <property type="match status" value="1"/>
</dbReference>
<dbReference type="Pfam" id="PF00275">
    <property type="entry name" value="EPSP_synthase"/>
    <property type="match status" value="1"/>
</dbReference>
<dbReference type="SUPFAM" id="SSF55205">
    <property type="entry name" value="EPT/RTPC-like"/>
    <property type="match status" value="1"/>
</dbReference>
<sequence length="429" mass="45531">MDRIHITGGAPLHGEIPISGAKNAALPLMIASLLTGETVELANVPRLADIASLLRILGNHGVDHMVVGKRPGQTAETGQTIRLTASNVIDTTAPYELVSTMRASFWVIAPLLARFGEARVSMPGGCAIGTRPVDLLLMAMERLGATIEIDGGYVVARTRNGLRGAEIVFPKVTVGGTHVALMAASLAQGTTVIDNAAREPEVVDLAECLSKMGARIEGAGTPRIVVEGVSRLGGARHEVLPDRIETGTYAMAVAMTGGDVILRDTRADLLHSALDVLATTGTEVTALPNGIRVRRNGAGVAAVDVTTDPFPGFPTDLQAQFMALMTKARGQSRIRETIFENRFMHVQELARLGARIRLEGDLAVVDGVERLRGAPVMATDLRASVSLVIAGLAAEGETIINRVYHLDRGFEALEAKLSRCGAQIRRERV</sequence>
<comment type="function">
    <text evidence="1">Cell wall formation. Adds enolpyruvyl to UDP-N-acetylglucosamine.</text>
</comment>
<comment type="catalytic activity">
    <reaction evidence="1">
        <text>phosphoenolpyruvate + UDP-N-acetyl-alpha-D-glucosamine = UDP-N-acetyl-3-O-(1-carboxyvinyl)-alpha-D-glucosamine + phosphate</text>
        <dbReference type="Rhea" id="RHEA:18681"/>
        <dbReference type="ChEBI" id="CHEBI:43474"/>
        <dbReference type="ChEBI" id="CHEBI:57705"/>
        <dbReference type="ChEBI" id="CHEBI:58702"/>
        <dbReference type="ChEBI" id="CHEBI:68483"/>
        <dbReference type="EC" id="2.5.1.7"/>
    </reaction>
</comment>
<comment type="pathway">
    <text evidence="1">Cell wall biogenesis; peptidoglycan biosynthesis.</text>
</comment>
<comment type="subcellular location">
    <subcellularLocation>
        <location evidence="1">Cytoplasm</location>
    </subcellularLocation>
</comment>
<comment type="similarity">
    <text evidence="1">Belongs to the EPSP synthase family. MurA subfamily.</text>
</comment>